<accession>A9QZS1</accession>
<sequence length="84" mass="9307">MPKKAASPEIKAASFETSLSELEQIVTRLESGELPLEDALNEFERGVQLARQGQQTLLQAEQRVQILLSDDVDAPLKPFTPDTE</sequence>
<comment type="function">
    <text evidence="1">Bidirectionally degrades single-stranded DNA into large acid-insoluble oligonucleotides, which are then degraded further into small acid-soluble oligonucleotides.</text>
</comment>
<comment type="catalytic activity">
    <reaction evidence="1">
        <text>Exonucleolytic cleavage in either 5'- to 3'- or 3'- to 5'-direction to yield nucleoside 5'-phosphates.</text>
        <dbReference type="EC" id="3.1.11.6"/>
    </reaction>
</comment>
<comment type="subunit">
    <text evidence="1">Heterooligomer composed of large and small subunits.</text>
</comment>
<comment type="subcellular location">
    <subcellularLocation>
        <location evidence="1">Cytoplasm</location>
    </subcellularLocation>
</comment>
<comment type="similarity">
    <text evidence="1">Belongs to the XseB family.</text>
</comment>
<protein>
    <recommendedName>
        <fullName evidence="1">Exodeoxyribonuclease 7 small subunit</fullName>
        <ecNumber evidence="1">3.1.11.6</ecNumber>
    </recommendedName>
    <alternativeName>
        <fullName evidence="1">Exodeoxyribonuclease VII small subunit</fullName>
        <shortName evidence="1">Exonuclease VII small subunit</shortName>
    </alternativeName>
</protein>
<feature type="chain" id="PRO_1000119973" description="Exodeoxyribonuclease 7 small subunit">
    <location>
        <begin position="1"/>
        <end position="84"/>
    </location>
</feature>
<name>EX7S_YERPG</name>
<keyword id="KW-0963">Cytoplasm</keyword>
<keyword id="KW-0269">Exonuclease</keyword>
<keyword id="KW-0378">Hydrolase</keyword>
<keyword id="KW-0540">Nuclease</keyword>
<organism>
    <name type="scientific">Yersinia pestis bv. Antiqua (strain Angola)</name>
    <dbReference type="NCBI Taxonomy" id="349746"/>
    <lineage>
        <taxon>Bacteria</taxon>
        <taxon>Pseudomonadati</taxon>
        <taxon>Pseudomonadota</taxon>
        <taxon>Gammaproteobacteria</taxon>
        <taxon>Enterobacterales</taxon>
        <taxon>Yersiniaceae</taxon>
        <taxon>Yersinia</taxon>
    </lineage>
</organism>
<gene>
    <name evidence="1" type="primary">xseB</name>
    <name type="ordered locus">YpAngola_A3072</name>
</gene>
<dbReference type="EC" id="3.1.11.6" evidence="1"/>
<dbReference type="EMBL" id="CP000901">
    <property type="protein sequence ID" value="ABX87304.1"/>
    <property type="molecule type" value="Genomic_DNA"/>
</dbReference>
<dbReference type="RefSeq" id="WP_002208660.1">
    <property type="nucleotide sequence ID" value="NZ_CP009935.1"/>
</dbReference>
<dbReference type="SMR" id="A9QZS1"/>
<dbReference type="GeneID" id="57975538"/>
<dbReference type="KEGG" id="ypg:YpAngola_A3072"/>
<dbReference type="PATRIC" id="fig|349746.12.peg.4128"/>
<dbReference type="GO" id="GO:0005829">
    <property type="term" value="C:cytosol"/>
    <property type="evidence" value="ECO:0007669"/>
    <property type="project" value="TreeGrafter"/>
</dbReference>
<dbReference type="GO" id="GO:0009318">
    <property type="term" value="C:exodeoxyribonuclease VII complex"/>
    <property type="evidence" value="ECO:0007669"/>
    <property type="project" value="InterPro"/>
</dbReference>
<dbReference type="GO" id="GO:0008855">
    <property type="term" value="F:exodeoxyribonuclease VII activity"/>
    <property type="evidence" value="ECO:0007669"/>
    <property type="project" value="UniProtKB-UniRule"/>
</dbReference>
<dbReference type="GO" id="GO:0006308">
    <property type="term" value="P:DNA catabolic process"/>
    <property type="evidence" value="ECO:0007669"/>
    <property type="project" value="UniProtKB-UniRule"/>
</dbReference>
<dbReference type="FunFam" id="1.10.287.1040:FF:000001">
    <property type="entry name" value="Exodeoxyribonuclease 7 small subunit"/>
    <property type="match status" value="1"/>
</dbReference>
<dbReference type="Gene3D" id="1.10.287.1040">
    <property type="entry name" value="Exonuclease VII, small subunit"/>
    <property type="match status" value="1"/>
</dbReference>
<dbReference type="HAMAP" id="MF_00337">
    <property type="entry name" value="Exonuc_7_S"/>
    <property type="match status" value="1"/>
</dbReference>
<dbReference type="InterPro" id="IPR003761">
    <property type="entry name" value="Exonuc_VII_S"/>
</dbReference>
<dbReference type="InterPro" id="IPR037004">
    <property type="entry name" value="Exonuc_VII_ssu_sf"/>
</dbReference>
<dbReference type="NCBIfam" id="NF002137">
    <property type="entry name" value="PRK00977.1-1"/>
    <property type="match status" value="1"/>
</dbReference>
<dbReference type="NCBIfam" id="NF002140">
    <property type="entry name" value="PRK00977.1-4"/>
    <property type="match status" value="1"/>
</dbReference>
<dbReference type="NCBIfam" id="TIGR01280">
    <property type="entry name" value="xseB"/>
    <property type="match status" value="1"/>
</dbReference>
<dbReference type="PANTHER" id="PTHR34137">
    <property type="entry name" value="EXODEOXYRIBONUCLEASE 7 SMALL SUBUNIT"/>
    <property type="match status" value="1"/>
</dbReference>
<dbReference type="PANTHER" id="PTHR34137:SF1">
    <property type="entry name" value="EXODEOXYRIBONUCLEASE 7 SMALL SUBUNIT"/>
    <property type="match status" value="1"/>
</dbReference>
<dbReference type="Pfam" id="PF02609">
    <property type="entry name" value="Exonuc_VII_S"/>
    <property type="match status" value="1"/>
</dbReference>
<dbReference type="PIRSF" id="PIRSF006488">
    <property type="entry name" value="Exonuc_VII_S"/>
    <property type="match status" value="1"/>
</dbReference>
<dbReference type="SUPFAM" id="SSF116842">
    <property type="entry name" value="XseB-like"/>
    <property type="match status" value="1"/>
</dbReference>
<evidence type="ECO:0000255" key="1">
    <source>
        <dbReference type="HAMAP-Rule" id="MF_00337"/>
    </source>
</evidence>
<reference key="1">
    <citation type="journal article" date="2010" name="J. Bacteriol.">
        <title>Genome sequence of the deep-rooted Yersinia pestis strain Angola reveals new insights into the evolution and pangenome of the plague bacterium.</title>
        <authorList>
            <person name="Eppinger M."/>
            <person name="Worsham P.L."/>
            <person name="Nikolich M.P."/>
            <person name="Riley D.R."/>
            <person name="Sebastian Y."/>
            <person name="Mou S."/>
            <person name="Achtman M."/>
            <person name="Lindler L.E."/>
            <person name="Ravel J."/>
        </authorList>
    </citation>
    <scope>NUCLEOTIDE SEQUENCE [LARGE SCALE GENOMIC DNA]</scope>
    <source>
        <strain>Angola</strain>
    </source>
</reference>
<proteinExistence type="inferred from homology"/>